<keyword id="KW-0066">ATP synthesis</keyword>
<keyword id="KW-0997">Cell inner membrane</keyword>
<keyword id="KW-1003">Cell membrane</keyword>
<keyword id="KW-0139">CF(1)</keyword>
<keyword id="KW-0375">Hydrogen ion transport</keyword>
<keyword id="KW-0406">Ion transport</keyword>
<keyword id="KW-0472">Membrane</keyword>
<keyword id="KW-1185">Reference proteome</keyword>
<keyword id="KW-0813">Transport</keyword>
<reference key="1">
    <citation type="journal article" date="2004" name="PLoS Biol.">
        <title>Genomic insights into methanotrophy: the complete genome sequence of Methylococcus capsulatus (Bath).</title>
        <authorList>
            <person name="Ward N.L."/>
            <person name="Larsen O."/>
            <person name="Sakwa J."/>
            <person name="Bruseth L."/>
            <person name="Khouri H.M."/>
            <person name="Durkin A.S."/>
            <person name="Dimitrov G."/>
            <person name="Jiang L."/>
            <person name="Scanlan D."/>
            <person name="Kang K.H."/>
            <person name="Lewis M.R."/>
            <person name="Nelson K.E."/>
            <person name="Methe B.A."/>
            <person name="Wu M."/>
            <person name="Heidelberg J.F."/>
            <person name="Paulsen I.T."/>
            <person name="Fouts D.E."/>
            <person name="Ravel J."/>
            <person name="Tettelin H."/>
            <person name="Ren Q."/>
            <person name="Read T.D."/>
            <person name="DeBoy R.T."/>
            <person name="Seshadri R."/>
            <person name="Salzberg S.L."/>
            <person name="Jensen H.B."/>
            <person name="Birkeland N.K."/>
            <person name="Nelson W.C."/>
            <person name="Dodson R.J."/>
            <person name="Grindhaug S.H."/>
            <person name="Holt I.E."/>
            <person name="Eidhammer I."/>
            <person name="Jonasen I."/>
            <person name="Vanaken S."/>
            <person name="Utterback T.R."/>
            <person name="Feldblyum T.V."/>
            <person name="Fraser C.M."/>
            <person name="Lillehaug J.R."/>
            <person name="Eisen J.A."/>
        </authorList>
    </citation>
    <scope>NUCLEOTIDE SEQUENCE [LARGE SCALE GENOMIC DNA]</scope>
    <source>
        <strain>ATCC 33009 / NCIMB 11132 / Bath</strain>
    </source>
</reference>
<dbReference type="EMBL" id="AE017282">
    <property type="protein sequence ID" value="AAU90744.1"/>
    <property type="molecule type" value="Genomic_DNA"/>
</dbReference>
<dbReference type="RefSeq" id="WP_010959384.1">
    <property type="nucleotide sequence ID" value="NC_002977.6"/>
</dbReference>
<dbReference type="SMR" id="Q60CR5"/>
<dbReference type="STRING" id="243233.MCA0011"/>
<dbReference type="GeneID" id="88222364"/>
<dbReference type="KEGG" id="mca:MCA0011"/>
<dbReference type="eggNOG" id="COG0224">
    <property type="taxonomic scope" value="Bacteria"/>
</dbReference>
<dbReference type="HOGENOM" id="CLU_050669_0_1_6"/>
<dbReference type="Proteomes" id="UP000006821">
    <property type="component" value="Chromosome"/>
</dbReference>
<dbReference type="GO" id="GO:0005886">
    <property type="term" value="C:plasma membrane"/>
    <property type="evidence" value="ECO:0007669"/>
    <property type="project" value="UniProtKB-SubCell"/>
</dbReference>
<dbReference type="GO" id="GO:0045259">
    <property type="term" value="C:proton-transporting ATP synthase complex"/>
    <property type="evidence" value="ECO:0007669"/>
    <property type="project" value="UniProtKB-KW"/>
</dbReference>
<dbReference type="GO" id="GO:0005524">
    <property type="term" value="F:ATP binding"/>
    <property type="evidence" value="ECO:0007669"/>
    <property type="project" value="UniProtKB-UniRule"/>
</dbReference>
<dbReference type="GO" id="GO:0046933">
    <property type="term" value="F:proton-transporting ATP synthase activity, rotational mechanism"/>
    <property type="evidence" value="ECO:0007669"/>
    <property type="project" value="UniProtKB-UniRule"/>
</dbReference>
<dbReference type="GO" id="GO:0042777">
    <property type="term" value="P:proton motive force-driven plasma membrane ATP synthesis"/>
    <property type="evidence" value="ECO:0007669"/>
    <property type="project" value="UniProtKB-UniRule"/>
</dbReference>
<dbReference type="CDD" id="cd12151">
    <property type="entry name" value="F1-ATPase_gamma"/>
    <property type="match status" value="1"/>
</dbReference>
<dbReference type="FunFam" id="1.10.287.80:FF:000005">
    <property type="entry name" value="ATP synthase gamma chain"/>
    <property type="match status" value="1"/>
</dbReference>
<dbReference type="Gene3D" id="3.40.1380.10">
    <property type="match status" value="1"/>
</dbReference>
<dbReference type="Gene3D" id="1.10.287.80">
    <property type="entry name" value="ATP synthase, gamma subunit, helix hairpin domain"/>
    <property type="match status" value="1"/>
</dbReference>
<dbReference type="HAMAP" id="MF_00815">
    <property type="entry name" value="ATP_synth_gamma_bact"/>
    <property type="match status" value="1"/>
</dbReference>
<dbReference type="InterPro" id="IPR035968">
    <property type="entry name" value="ATP_synth_F1_ATPase_gsu"/>
</dbReference>
<dbReference type="InterPro" id="IPR000131">
    <property type="entry name" value="ATP_synth_F1_gsu"/>
</dbReference>
<dbReference type="InterPro" id="IPR023632">
    <property type="entry name" value="ATP_synth_F1_gsu_CS"/>
</dbReference>
<dbReference type="NCBIfam" id="TIGR01146">
    <property type="entry name" value="ATPsyn_F1gamma"/>
    <property type="match status" value="1"/>
</dbReference>
<dbReference type="NCBIfam" id="NF004144">
    <property type="entry name" value="PRK05621.1-1"/>
    <property type="match status" value="1"/>
</dbReference>
<dbReference type="PANTHER" id="PTHR11693">
    <property type="entry name" value="ATP SYNTHASE GAMMA CHAIN"/>
    <property type="match status" value="1"/>
</dbReference>
<dbReference type="PANTHER" id="PTHR11693:SF22">
    <property type="entry name" value="ATP SYNTHASE SUBUNIT GAMMA, MITOCHONDRIAL"/>
    <property type="match status" value="1"/>
</dbReference>
<dbReference type="Pfam" id="PF00231">
    <property type="entry name" value="ATP-synt"/>
    <property type="match status" value="1"/>
</dbReference>
<dbReference type="PRINTS" id="PR00126">
    <property type="entry name" value="ATPASEGAMMA"/>
</dbReference>
<dbReference type="SUPFAM" id="SSF52943">
    <property type="entry name" value="ATP synthase (F1-ATPase), gamma subunit"/>
    <property type="match status" value="1"/>
</dbReference>
<dbReference type="PROSITE" id="PS00153">
    <property type="entry name" value="ATPASE_GAMMA"/>
    <property type="match status" value="1"/>
</dbReference>
<sequence>MAVGKEIRIKIASVRNTQKITRAMEMVAASKMRRTQDRLQATRPYARKIARIIKHLAQANPEYKNPFMVERPVKRVGVVLVSSDRGLCGGLNSNLFRLLLRRMRAWGEAGVEVRLGVIGQKGASFFGGVGADVAAQVVRLGDTPHLEGIIGVLKVMLDAYGEGEIDELYVAHNEFVNTMTQKPKLECLAPIKAEELSDELKGHWDYLYEPDAKTVLDALITRYIESLVFQGLVENNACEQAARMVAMKSASDNAGKLIKELQLIYNKARQAAITQEIAEIVGGAAAV</sequence>
<protein>
    <recommendedName>
        <fullName evidence="1">ATP synthase gamma chain</fullName>
    </recommendedName>
    <alternativeName>
        <fullName evidence="1">ATP synthase F1 sector gamma subunit</fullName>
    </alternativeName>
    <alternativeName>
        <fullName evidence="1">F-ATPase gamma subunit</fullName>
    </alternativeName>
</protein>
<organism>
    <name type="scientific">Methylococcus capsulatus (strain ATCC 33009 / NCIMB 11132 / Bath)</name>
    <dbReference type="NCBI Taxonomy" id="243233"/>
    <lineage>
        <taxon>Bacteria</taxon>
        <taxon>Pseudomonadati</taxon>
        <taxon>Pseudomonadota</taxon>
        <taxon>Gammaproteobacteria</taxon>
        <taxon>Methylococcales</taxon>
        <taxon>Methylococcaceae</taxon>
        <taxon>Methylococcus</taxon>
    </lineage>
</organism>
<name>ATPG_METCA</name>
<accession>Q60CR5</accession>
<evidence type="ECO:0000255" key="1">
    <source>
        <dbReference type="HAMAP-Rule" id="MF_00815"/>
    </source>
</evidence>
<comment type="function">
    <text evidence="1">Produces ATP from ADP in the presence of a proton gradient across the membrane. The gamma chain is believed to be important in regulating ATPase activity and the flow of protons through the CF(0) complex.</text>
</comment>
<comment type="subunit">
    <text evidence="1">F-type ATPases have 2 components, CF(1) - the catalytic core - and CF(0) - the membrane proton channel. CF(1) has five subunits: alpha(3), beta(3), gamma(1), delta(1), epsilon(1). CF(0) has three main subunits: a, b and c.</text>
</comment>
<comment type="subcellular location">
    <subcellularLocation>
        <location evidence="1">Cell inner membrane</location>
        <topology evidence="1">Peripheral membrane protein</topology>
    </subcellularLocation>
</comment>
<comment type="similarity">
    <text evidence="1">Belongs to the ATPase gamma chain family.</text>
</comment>
<gene>
    <name evidence="1" type="primary">atpG</name>
    <name type="ordered locus">MCA0011</name>
</gene>
<feature type="chain" id="PRO_0000073313" description="ATP synthase gamma chain">
    <location>
        <begin position="1"/>
        <end position="287"/>
    </location>
</feature>
<proteinExistence type="inferred from homology"/>